<dbReference type="EMBL" id="AK014984">
    <property type="protein sequence ID" value="BAB29654.1"/>
    <property type="molecule type" value="mRNA"/>
</dbReference>
<dbReference type="EMBL" id="BC046425">
    <property type="protein sequence ID" value="AAH46425.1"/>
    <property type="molecule type" value="mRNA"/>
</dbReference>
<dbReference type="EMBL" id="BC137623">
    <property type="protein sequence ID" value="AAI37624.1"/>
    <property type="molecule type" value="mRNA"/>
</dbReference>
<dbReference type="EMBL" id="AJ586616">
    <property type="protein sequence ID" value="CAE52464.1"/>
    <property type="molecule type" value="mRNA"/>
</dbReference>
<dbReference type="CCDS" id="CCDS51799.1">
    <molecule id="B2RPV6-1"/>
</dbReference>
<dbReference type="RefSeq" id="NP_001156979.1">
    <property type="nucleotide sequence ID" value="NM_001163507.1"/>
</dbReference>
<dbReference type="RefSeq" id="NP_081889.1">
    <property type="nucleotide sequence ID" value="NM_027613.1"/>
</dbReference>
<dbReference type="SMR" id="B2RPV6"/>
<dbReference type="BioGRID" id="214362">
    <property type="interactions" value="2"/>
</dbReference>
<dbReference type="ComplexPortal" id="CPX-447">
    <property type="entry name" value="Multimerin-1 complex"/>
</dbReference>
<dbReference type="FunCoup" id="B2RPV6">
    <property type="interactions" value="39"/>
</dbReference>
<dbReference type="STRING" id="10090.ENSMUSP00000119609"/>
<dbReference type="GlyCosmos" id="B2RPV6">
    <property type="glycosylation" value="16 sites, No reported glycans"/>
</dbReference>
<dbReference type="GlyGen" id="B2RPV6">
    <property type="glycosylation" value="16 sites, 1 N-linked glycan (1 site)"/>
</dbReference>
<dbReference type="iPTMnet" id="B2RPV6"/>
<dbReference type="PhosphoSitePlus" id="B2RPV6"/>
<dbReference type="jPOST" id="B2RPV6"/>
<dbReference type="PaxDb" id="10090-ENSMUSP00000119609"/>
<dbReference type="PeptideAtlas" id="B2RPV6"/>
<dbReference type="ProteomicsDB" id="291374">
    <molecule id="B2RPV6-1"/>
</dbReference>
<dbReference type="ProteomicsDB" id="291375">
    <molecule id="B2RPV6-2"/>
</dbReference>
<dbReference type="GeneID" id="70945"/>
<dbReference type="KEGG" id="mmu:70945"/>
<dbReference type="UCSC" id="uc009cdq.1">
    <molecule id="B2RPV6-2"/>
    <property type="organism name" value="mouse"/>
</dbReference>
<dbReference type="AGR" id="MGI:1918195"/>
<dbReference type="CTD" id="22915"/>
<dbReference type="MGI" id="MGI:1918195">
    <property type="gene designation" value="Mmrn1"/>
</dbReference>
<dbReference type="eggNOG" id="ENOG502QTYP">
    <property type="taxonomic scope" value="Eukaryota"/>
</dbReference>
<dbReference type="InParanoid" id="B2RPV6"/>
<dbReference type="OrthoDB" id="10044191at2759"/>
<dbReference type="Reactome" id="R-MMU-114608">
    <property type="pathway name" value="Platelet degranulation"/>
</dbReference>
<dbReference type="BioGRID-ORCS" id="70945">
    <property type="hits" value="4 hits in 78 CRISPR screens"/>
</dbReference>
<dbReference type="PRO" id="PR:B2RPV6"/>
<dbReference type="Proteomes" id="UP000000589">
    <property type="component" value="Unplaced"/>
</dbReference>
<dbReference type="RNAct" id="B2RPV6">
    <property type="molecule type" value="protein"/>
</dbReference>
<dbReference type="GO" id="GO:0062023">
    <property type="term" value="C:collagen-containing extracellular matrix"/>
    <property type="evidence" value="ECO:0007005"/>
    <property type="project" value="BHF-UCL"/>
</dbReference>
<dbReference type="GO" id="GO:0005576">
    <property type="term" value="C:extracellular region"/>
    <property type="evidence" value="ECO:0000250"/>
    <property type="project" value="UniProtKB"/>
</dbReference>
<dbReference type="GO" id="GO:1990972">
    <property type="term" value="C:multimerin complex"/>
    <property type="evidence" value="ECO:0000266"/>
    <property type="project" value="ComplexPortal"/>
</dbReference>
<dbReference type="GO" id="GO:0031091">
    <property type="term" value="C:platelet alpha granule"/>
    <property type="evidence" value="ECO:0000266"/>
    <property type="project" value="ComplexPortal"/>
</dbReference>
<dbReference type="GO" id="GO:0005509">
    <property type="term" value="F:calcium ion binding"/>
    <property type="evidence" value="ECO:0007669"/>
    <property type="project" value="InterPro"/>
</dbReference>
<dbReference type="GO" id="GO:0033627">
    <property type="term" value="P:cell adhesion mediated by integrin"/>
    <property type="evidence" value="ECO:0000266"/>
    <property type="project" value="ComplexPortal"/>
</dbReference>
<dbReference type="GO" id="GO:0061045">
    <property type="term" value="P:negative regulation of wound healing"/>
    <property type="evidence" value="ECO:0000314"/>
    <property type="project" value="ComplexPortal"/>
</dbReference>
<dbReference type="GO" id="GO:1901731">
    <property type="term" value="P:positive regulation of platelet aggregation"/>
    <property type="evidence" value="ECO:0000314"/>
    <property type="project" value="ComplexPortal"/>
</dbReference>
<dbReference type="CDD" id="cd00054">
    <property type="entry name" value="EGF_CA"/>
    <property type="match status" value="1"/>
</dbReference>
<dbReference type="FunFam" id="2.10.25.10:FF:000548">
    <property type="entry name" value="Multimerin 1"/>
    <property type="match status" value="1"/>
</dbReference>
<dbReference type="FunFam" id="2.60.120.40:FF:000009">
    <property type="entry name" value="Multimerin-1"/>
    <property type="match status" value="1"/>
</dbReference>
<dbReference type="Gene3D" id="2.60.120.40">
    <property type="match status" value="1"/>
</dbReference>
<dbReference type="Gene3D" id="2.10.25.10">
    <property type="entry name" value="Laminin"/>
    <property type="match status" value="1"/>
</dbReference>
<dbReference type="InterPro" id="IPR001073">
    <property type="entry name" value="C1q_dom"/>
</dbReference>
<dbReference type="InterPro" id="IPR050392">
    <property type="entry name" value="Collagen/C1q_domain"/>
</dbReference>
<dbReference type="InterPro" id="IPR001881">
    <property type="entry name" value="EGF-like_Ca-bd_dom"/>
</dbReference>
<dbReference type="InterPro" id="IPR000742">
    <property type="entry name" value="EGF-like_dom"/>
</dbReference>
<dbReference type="InterPro" id="IPR011489">
    <property type="entry name" value="EMI_domain"/>
</dbReference>
<dbReference type="InterPro" id="IPR008983">
    <property type="entry name" value="Tumour_necrosis_fac-like_dom"/>
</dbReference>
<dbReference type="PANTHER" id="PTHR15427">
    <property type="entry name" value="EMILIN ELASTIN MICROFIBRIL INTERFACE-LOCATED PROTEIN ELASTIN MICROFIBRIL INTERFACER"/>
    <property type="match status" value="1"/>
</dbReference>
<dbReference type="PANTHER" id="PTHR15427:SF3">
    <property type="entry name" value="MULTIMERIN-1"/>
    <property type="match status" value="1"/>
</dbReference>
<dbReference type="Pfam" id="PF00386">
    <property type="entry name" value="C1q"/>
    <property type="match status" value="1"/>
</dbReference>
<dbReference type="Pfam" id="PF00008">
    <property type="entry name" value="EGF"/>
    <property type="match status" value="1"/>
</dbReference>
<dbReference type="Pfam" id="PF07546">
    <property type="entry name" value="EMI"/>
    <property type="match status" value="1"/>
</dbReference>
<dbReference type="PRINTS" id="PR00007">
    <property type="entry name" value="COMPLEMNTC1Q"/>
</dbReference>
<dbReference type="SMART" id="SM00110">
    <property type="entry name" value="C1Q"/>
    <property type="match status" value="1"/>
</dbReference>
<dbReference type="SMART" id="SM00181">
    <property type="entry name" value="EGF"/>
    <property type="match status" value="1"/>
</dbReference>
<dbReference type="SMART" id="SM00179">
    <property type="entry name" value="EGF_CA"/>
    <property type="match status" value="1"/>
</dbReference>
<dbReference type="SUPFAM" id="SSF57196">
    <property type="entry name" value="EGF/Laminin"/>
    <property type="match status" value="1"/>
</dbReference>
<dbReference type="SUPFAM" id="SSF49842">
    <property type="entry name" value="TNF-like"/>
    <property type="match status" value="1"/>
</dbReference>
<dbReference type="PROSITE" id="PS50871">
    <property type="entry name" value="C1Q"/>
    <property type="match status" value="1"/>
</dbReference>
<dbReference type="PROSITE" id="PS00022">
    <property type="entry name" value="EGF_1"/>
    <property type="match status" value="1"/>
</dbReference>
<dbReference type="PROSITE" id="PS01186">
    <property type="entry name" value="EGF_2"/>
    <property type="match status" value="1"/>
</dbReference>
<dbReference type="PROSITE" id="PS50026">
    <property type="entry name" value="EGF_3"/>
    <property type="match status" value="1"/>
</dbReference>
<dbReference type="PROSITE" id="PS51041">
    <property type="entry name" value="EMI"/>
    <property type="match status" value="1"/>
</dbReference>
<evidence type="ECO:0000250" key="1">
    <source>
        <dbReference type="UniProtKB" id="Q13201"/>
    </source>
</evidence>
<evidence type="ECO:0000255" key="2"/>
<evidence type="ECO:0000255" key="3">
    <source>
        <dbReference type="PROSITE-ProRule" id="PRU00076"/>
    </source>
</evidence>
<evidence type="ECO:0000255" key="4">
    <source>
        <dbReference type="PROSITE-ProRule" id="PRU00368"/>
    </source>
</evidence>
<evidence type="ECO:0000255" key="5">
    <source>
        <dbReference type="PROSITE-ProRule" id="PRU00384"/>
    </source>
</evidence>
<evidence type="ECO:0000256" key="6">
    <source>
        <dbReference type="SAM" id="MobiDB-lite"/>
    </source>
</evidence>
<evidence type="ECO:0000269" key="7">
    <source>
    </source>
</evidence>
<evidence type="ECO:0000269" key="8">
    <source>
    </source>
</evidence>
<evidence type="ECO:0000269" key="9">
    <source>
    </source>
</evidence>
<evidence type="ECO:0000303" key="10">
    <source>
    </source>
</evidence>
<evidence type="ECO:0000305" key="11"/>
<evidence type="ECO:0000312" key="12">
    <source>
        <dbReference type="EMBL" id="AAH46425.1"/>
    </source>
</evidence>
<evidence type="ECO:0000312" key="13">
    <source>
        <dbReference type="EMBL" id="AAI37624.1"/>
    </source>
</evidence>
<evidence type="ECO:0000312" key="14">
    <source>
        <dbReference type="EMBL" id="BAB29654.1"/>
    </source>
</evidence>
<evidence type="ECO:0000312" key="15">
    <source>
        <dbReference type="EMBL" id="CAE52464.1"/>
    </source>
</evidence>
<evidence type="ECO:0000312" key="16">
    <source>
        <dbReference type="MGI" id="MGI:1918195"/>
    </source>
</evidence>
<accession>B2RPV6</accession>
<accession>Q6KDN2</accession>
<accession>Q80VQ7</accession>
<accession>Q9D5S2</accession>
<name>MMRN1_MOUSE</name>
<protein>
    <recommendedName>
        <fullName evidence="13">Multimerin-1</fullName>
    </recommendedName>
</protein>
<gene>
    <name evidence="13 16" type="primary">Mmrn1</name>
</gene>
<feature type="signal peptide" evidence="2">
    <location>
        <begin position="1"/>
        <end position="19"/>
    </location>
</feature>
<feature type="chain" id="PRO_0000367039" description="Multimerin-1" evidence="2">
    <location>
        <begin position="20"/>
        <end position="1210"/>
    </location>
</feature>
<feature type="domain" description="EMI" evidence="5">
    <location>
        <begin position="192"/>
        <end position="267"/>
    </location>
</feature>
<feature type="domain" description="EGF-like" evidence="3">
    <location>
        <begin position="1023"/>
        <end position="1059"/>
    </location>
</feature>
<feature type="domain" description="C1q" evidence="4">
    <location>
        <begin position="1078"/>
        <end position="1210"/>
    </location>
</feature>
<feature type="region of interest" description="Disordered" evidence="6">
    <location>
        <begin position="57"/>
        <end position="102"/>
    </location>
</feature>
<feature type="region of interest" description="Disordered" evidence="6">
    <location>
        <begin position="143"/>
        <end position="190"/>
    </location>
</feature>
<feature type="region of interest" description="Disordered" evidence="6">
    <location>
        <begin position="276"/>
        <end position="299"/>
    </location>
</feature>
<feature type="coiled-coil region" evidence="2">
    <location>
        <begin position="303"/>
        <end position="338"/>
    </location>
</feature>
<feature type="coiled-coil region" evidence="2">
    <location>
        <begin position="564"/>
        <end position="690"/>
    </location>
</feature>
<feature type="coiled-coil region" evidence="2">
    <location>
        <begin position="809"/>
        <end position="846"/>
    </location>
</feature>
<feature type="compositionally biased region" description="Low complexity" evidence="6">
    <location>
        <begin position="80"/>
        <end position="92"/>
    </location>
</feature>
<feature type="compositionally biased region" description="Polar residues" evidence="6">
    <location>
        <begin position="143"/>
        <end position="155"/>
    </location>
</feature>
<feature type="compositionally biased region" description="Basic and acidic residues" evidence="6">
    <location>
        <begin position="163"/>
        <end position="176"/>
    </location>
</feature>
<feature type="compositionally biased region" description="Polar residues" evidence="6">
    <location>
        <begin position="177"/>
        <end position="189"/>
    </location>
</feature>
<feature type="glycosylation site" description="N-linked (GlcNAc...) asparagine" evidence="2">
    <location>
        <position position="133"/>
    </location>
</feature>
<feature type="glycosylation site" description="N-linked (GlcNAc...) asparagine" evidence="2">
    <location>
        <position position="161"/>
    </location>
</feature>
<feature type="glycosylation site" description="O-linked (Fuc) threonine" evidence="1">
    <location>
        <position position="201"/>
    </location>
</feature>
<feature type="glycosylation site" description="O-linked (Fuc) threonine" evidence="1">
    <location>
        <position position="250"/>
    </location>
</feature>
<feature type="glycosylation site" description="N-linked (GlcNAc...) asparagine" evidence="2">
    <location>
        <position position="328"/>
    </location>
</feature>
<feature type="glycosylation site" description="N-linked (GlcNAc...) asparagine" evidence="2">
    <location>
        <position position="415"/>
    </location>
</feature>
<feature type="glycosylation site" description="N-linked (GlcNAc...) asparagine" evidence="2">
    <location>
        <position position="491"/>
    </location>
</feature>
<feature type="glycosylation site" description="N-linked (GlcNAc...) asparagine" evidence="2">
    <location>
        <position position="525"/>
    </location>
</feature>
<feature type="glycosylation site" description="N-linked (GlcNAc...) asparagine" evidence="2">
    <location>
        <position position="560"/>
    </location>
</feature>
<feature type="glycosylation site" description="N-linked (GlcNAc...) asparagine" evidence="2">
    <location>
        <position position="602"/>
    </location>
</feature>
<feature type="glycosylation site" description="N-linked (GlcNAc...) asparagine" evidence="2">
    <location>
        <position position="712"/>
    </location>
</feature>
<feature type="glycosylation site" description="N-linked (GlcNAc...) asparagine" evidence="2">
    <location>
        <position position="765"/>
    </location>
</feature>
<feature type="glycosylation site" description="N-linked (GlcNAc...) asparagine" evidence="2">
    <location>
        <position position="810"/>
    </location>
</feature>
<feature type="glycosylation site" description="N-linked (GlcNAc...) asparagine" evidence="2">
    <location>
        <position position="822"/>
    </location>
</feature>
<feature type="glycosylation site" description="N-linked (GlcNAc...) asparagine" evidence="2">
    <location>
        <position position="903"/>
    </location>
</feature>
<feature type="glycosylation site" description="N-linked (GlcNAc...) asparagine" evidence="2">
    <location>
        <position position="915"/>
    </location>
</feature>
<feature type="glycosylation site" description="N-linked (GlcNAc...) asparagine" evidence="2">
    <location>
        <position position="963"/>
    </location>
</feature>
<feature type="glycosylation site" description="N-linked (GlcNAc...) asparagine" evidence="2">
    <location>
        <position position="1000"/>
    </location>
</feature>
<feature type="glycosylation site" description="O-linked (Fuc) threonine" evidence="1">
    <location>
        <position position="1037"/>
    </location>
</feature>
<feature type="disulfide bond" evidence="5">
    <location>
        <begin position="196"/>
        <end position="257"/>
    </location>
</feature>
<feature type="disulfide bond" evidence="5">
    <location>
        <begin position="222"/>
        <end position="230"/>
    </location>
</feature>
<feature type="disulfide bond" evidence="5">
    <location>
        <begin position="256"/>
        <end position="265"/>
    </location>
</feature>
<feature type="disulfide bond" evidence="3">
    <location>
        <begin position="1027"/>
        <end position="1038"/>
    </location>
</feature>
<feature type="disulfide bond" evidence="3">
    <location>
        <begin position="1032"/>
        <end position="1047"/>
    </location>
</feature>
<feature type="disulfide bond" evidence="3">
    <location>
        <begin position="1049"/>
        <end position="1058"/>
    </location>
</feature>
<feature type="splice variant" id="VSP_053049" description="In isoform 2." evidence="10">
    <location>
        <begin position="194"/>
        <end position="1210"/>
    </location>
</feature>
<feature type="sequence conflict" description="In Ref. 1; BAB29654." evidence="11" ref="1">
    <original>H</original>
    <variation>P</variation>
    <location>
        <position position="41"/>
    </location>
</feature>
<feature type="sequence conflict" description="In Ref. 1; BAB29654." evidence="11" ref="1">
    <original>E</original>
    <variation>D</variation>
    <location>
        <position position="93"/>
    </location>
</feature>
<feature type="sequence conflict" description="In Ref. 1; BAB29654." evidence="11" ref="1">
    <original>H</original>
    <variation>S</variation>
    <location>
        <position position="96"/>
    </location>
</feature>
<feature type="sequence conflict" description="In Ref. 1; BAB29654." evidence="11" ref="1">
    <original>P</original>
    <variation>S</variation>
    <location>
        <position position="99"/>
    </location>
</feature>
<feature type="sequence conflict" description="In Ref. 1; BAB29654." evidence="11" ref="1">
    <original>L</original>
    <variation>M</variation>
    <location>
        <position position="110"/>
    </location>
</feature>
<feature type="sequence conflict" description="In Ref. 1; AAI37624." evidence="11" ref="1">
    <original>L</original>
    <variation>V</variation>
    <location>
        <position position="935"/>
    </location>
</feature>
<sequence length="1210" mass="136106">MLGLKFLVLLSILWGRVFRLTNTQHSWTAPKDEDASLTPNHASASVSEILSLQVLSATQNPSTQGPAAAERSSEDDVLLQSTSQPSETSTPPEGRHQTPLEKTGTAVVSLPLSLQDKPSIKPSTGAGTVMLANATLKFLQSFSRKSDQQEVSTKSAGDMGNRSARETHLRRSDNSRNQRPSYQKPSFETTRGKNWCAHVHTKLSPTVILDTGSHLPSGRGSCGWYSSGLCSRRSQKTSNAVYRMQHKIVTSLEWRCCPGYIGPNCQLKVEEQQQLAHSNQAESHTAVDQGRAQQQKQDCGDPAMIQKLAEQLSQQERKLSLLQKKVDNASLVADDMRNAYLSLEGKVGEDNSRQFQSFLKALKSKSIEDLLKNIVKEQFKVFQDDMQETTAQIFKTVSSLSEDLESTRQAVLQVNQSFVSSTAQKDFAFMQENQPTWKDITDLKNSIMNIRQEMALTCEKPVKELEAKQAHLEGALRQEHSQIVLYHQSLNETLSKMQEAHIQLLSVLQVSGTENVATEESLNSNVTKYISVLQETASKQGLMLLQMLSDLHVQESKISNLTILLEMEKESARGECEEMLSKCRHDFKFQLKDTEENLHVLNQTLSEVIFPMDIKVDKMSEQLNDLTYDMEILQPLLEQRSSLQHQVIHKPKEATVTRRELQNLIGAINQLNVLTKELTKRHNLLRNEVQSRGEAFERRISEHALETEDGLNKTMTVINNAIDFVQDNYVLKETLSAMTYNPKVCECNQNMDNILTFVSEFQHLNDSIQTLVNNKEKYNFILQIAKALTAIPKDEKLNQLNFQNIYQLFNETTSQVNKCQQNMSHLEENMLSVTKTAKEFETRLQGIESKVTKTLIPYYISFKKGGILSNERDVDLQLKVLNTRFKALEAKSIHLSVSFSLLNKTVRELSMACRNASTGTCGQNALIPRWTKGSLPGSQSSQKSLTELVESIVEIKTQAALSNLTWNVDRLLSDTLANIVKPQKQIKLQKKPNTLKKTVNMTTILIGRTQRNTDTIIHPVAQEHSSCSSFPCQNGGTCISGRSNFICACRHPFMGDTCTVKIKEDDAVAPDFSKGSYRYAPMVAFFVSHTHGMTAPGPILFNDLSVNYGASYNPRTGKFRIPYLGVYIFKYTIESFSAHISGFFVVDGVDKLRFESENADNEIHCDRVLTGDALFELNYGQEVWLRLVKGTIPIKYPPVTTFSGYLLYRT</sequence>
<keyword id="KW-0025">Alternative splicing</keyword>
<keyword id="KW-0175">Coiled coil</keyword>
<keyword id="KW-1015">Disulfide bond</keyword>
<keyword id="KW-0245">EGF-like domain</keyword>
<keyword id="KW-0325">Glycoprotein</keyword>
<keyword id="KW-1185">Reference proteome</keyword>
<keyword id="KW-0964">Secreted</keyword>
<keyword id="KW-0732">Signal</keyword>
<proteinExistence type="evidence at protein level"/>
<comment type="function">
    <text evidence="1">Carrier protein for platelet (but not plasma) factor V/Va. Plays a role in the storage and stabilization of factor V in platelets. Upon release following platelet activation, may limit platelet and plasma factor Va-dependent thrombin generation. Ligand for integrin alpha-IIb/beta-3 and integrin alpha-V/beta-3 on activated platelets, and may function as an extracellular matrix or adhesive protein (By similarity).</text>
</comment>
<comment type="subunit">
    <text evidence="1">Multimeric. Composed of varying sized, disulfide-linked multimers, the smallest of which is a homotrimer. Proteolysis of the promultimerin in the N-terminal region, leads to the mature p155 form that is stored in platelets. Interacts with factor V/Va (By similarity).</text>
</comment>
<comment type="subcellular location">
    <subcellularLocation>
        <location evidence="1">Secreted</location>
    </subcellularLocation>
    <text evidence="1">O-fucosylation of Thr-201 and Thr-1037 is important for protein secretion.</text>
</comment>
<comment type="alternative products">
    <event type="alternative splicing"/>
    <isoform>
        <id>B2RPV6-1</id>
        <name evidence="7 8">1</name>
        <sequence type="displayed"/>
    </isoform>
    <isoform>
        <id>B2RPV6-2</id>
        <name evidence="9">2</name>
        <sequence type="described" ref="VSP_053049"/>
    </isoform>
</comment>
<comment type="PTM">
    <text evidence="1">Extensively N-glycosylated.</text>
</comment>
<comment type="PTM">
    <text evidence="1">O-fucosylated within the EMI domain (at Thr-201 and Thr-250) by FUT10/POFUT3 and FUT11/POFUT4. O-fucosylation at Thr-201 and Thr-1037 are required for facilitating protein folding and secretion.</text>
</comment>
<reference evidence="11 14" key="1">
    <citation type="journal article" date="2005" name="Science">
        <title>The transcriptional landscape of the mammalian genome.</title>
        <authorList>
            <person name="Carninci P."/>
            <person name="Kasukawa T."/>
            <person name="Katayama S."/>
            <person name="Gough J."/>
            <person name="Frith M.C."/>
            <person name="Maeda N."/>
            <person name="Oyama R."/>
            <person name="Ravasi T."/>
            <person name="Lenhard B."/>
            <person name="Wells C."/>
            <person name="Kodzius R."/>
            <person name="Shimokawa K."/>
            <person name="Bajic V.B."/>
            <person name="Brenner S.E."/>
            <person name="Batalov S."/>
            <person name="Forrest A.R."/>
            <person name="Zavolan M."/>
            <person name="Davis M.J."/>
            <person name="Wilming L.G."/>
            <person name="Aidinis V."/>
            <person name="Allen J.E."/>
            <person name="Ambesi-Impiombato A."/>
            <person name="Apweiler R."/>
            <person name="Aturaliya R.N."/>
            <person name="Bailey T.L."/>
            <person name="Bansal M."/>
            <person name="Baxter L."/>
            <person name="Beisel K.W."/>
            <person name="Bersano T."/>
            <person name="Bono H."/>
            <person name="Chalk A.M."/>
            <person name="Chiu K.P."/>
            <person name="Choudhary V."/>
            <person name="Christoffels A."/>
            <person name="Clutterbuck D.R."/>
            <person name="Crowe M.L."/>
            <person name="Dalla E."/>
            <person name="Dalrymple B.P."/>
            <person name="de Bono B."/>
            <person name="Della Gatta G."/>
            <person name="di Bernardo D."/>
            <person name="Down T."/>
            <person name="Engstrom P."/>
            <person name="Fagiolini M."/>
            <person name="Faulkner G."/>
            <person name="Fletcher C.F."/>
            <person name="Fukushima T."/>
            <person name="Furuno M."/>
            <person name="Futaki S."/>
            <person name="Gariboldi M."/>
            <person name="Georgii-Hemming P."/>
            <person name="Gingeras T.R."/>
            <person name="Gojobori T."/>
            <person name="Green R.E."/>
            <person name="Gustincich S."/>
            <person name="Harbers M."/>
            <person name="Hayashi Y."/>
            <person name="Hensch T.K."/>
            <person name="Hirokawa N."/>
            <person name="Hill D."/>
            <person name="Huminiecki L."/>
            <person name="Iacono M."/>
            <person name="Ikeo K."/>
            <person name="Iwama A."/>
            <person name="Ishikawa T."/>
            <person name="Jakt M."/>
            <person name="Kanapin A."/>
            <person name="Katoh M."/>
            <person name="Kawasawa Y."/>
            <person name="Kelso J."/>
            <person name="Kitamura H."/>
            <person name="Kitano H."/>
            <person name="Kollias G."/>
            <person name="Krishnan S.P."/>
            <person name="Kruger A."/>
            <person name="Kummerfeld S.K."/>
            <person name="Kurochkin I.V."/>
            <person name="Lareau L.F."/>
            <person name="Lazarevic D."/>
            <person name="Lipovich L."/>
            <person name="Liu J."/>
            <person name="Liuni S."/>
            <person name="McWilliam S."/>
            <person name="Madan Babu M."/>
            <person name="Madera M."/>
            <person name="Marchionni L."/>
            <person name="Matsuda H."/>
            <person name="Matsuzawa S."/>
            <person name="Miki H."/>
            <person name="Mignone F."/>
            <person name="Miyake S."/>
            <person name="Morris K."/>
            <person name="Mottagui-Tabar S."/>
            <person name="Mulder N."/>
            <person name="Nakano N."/>
            <person name="Nakauchi H."/>
            <person name="Ng P."/>
            <person name="Nilsson R."/>
            <person name="Nishiguchi S."/>
            <person name="Nishikawa S."/>
            <person name="Nori F."/>
            <person name="Ohara O."/>
            <person name="Okazaki Y."/>
            <person name="Orlando V."/>
            <person name="Pang K.C."/>
            <person name="Pavan W.J."/>
            <person name="Pavesi G."/>
            <person name="Pesole G."/>
            <person name="Petrovsky N."/>
            <person name="Piazza S."/>
            <person name="Reed J."/>
            <person name="Reid J.F."/>
            <person name="Ring B.Z."/>
            <person name="Ringwald M."/>
            <person name="Rost B."/>
            <person name="Ruan Y."/>
            <person name="Salzberg S.L."/>
            <person name="Sandelin A."/>
            <person name="Schneider C."/>
            <person name="Schoenbach C."/>
            <person name="Sekiguchi K."/>
            <person name="Semple C.A."/>
            <person name="Seno S."/>
            <person name="Sessa L."/>
            <person name="Sheng Y."/>
            <person name="Shibata Y."/>
            <person name="Shimada H."/>
            <person name="Shimada K."/>
            <person name="Silva D."/>
            <person name="Sinclair B."/>
            <person name="Sperling S."/>
            <person name="Stupka E."/>
            <person name="Sugiura K."/>
            <person name="Sultana R."/>
            <person name="Takenaka Y."/>
            <person name="Taki K."/>
            <person name="Tammoja K."/>
            <person name="Tan S.L."/>
            <person name="Tang S."/>
            <person name="Taylor M.S."/>
            <person name="Tegner J."/>
            <person name="Teichmann S.A."/>
            <person name="Ueda H.R."/>
            <person name="van Nimwegen E."/>
            <person name="Verardo R."/>
            <person name="Wei C.L."/>
            <person name="Yagi K."/>
            <person name="Yamanishi H."/>
            <person name="Zabarovsky E."/>
            <person name="Zhu S."/>
            <person name="Zimmer A."/>
            <person name="Hide W."/>
            <person name="Bult C."/>
            <person name="Grimmond S.M."/>
            <person name="Teasdale R.D."/>
            <person name="Liu E.T."/>
            <person name="Brusic V."/>
            <person name="Quackenbush J."/>
            <person name="Wahlestedt C."/>
            <person name="Mattick J.S."/>
            <person name="Hume D.A."/>
            <person name="Kai C."/>
            <person name="Sasaki D."/>
            <person name="Tomaru Y."/>
            <person name="Fukuda S."/>
            <person name="Kanamori-Katayama M."/>
            <person name="Suzuki M."/>
            <person name="Aoki J."/>
            <person name="Arakawa T."/>
            <person name="Iida J."/>
            <person name="Imamura K."/>
            <person name="Itoh M."/>
            <person name="Kato T."/>
            <person name="Kawaji H."/>
            <person name="Kawagashira N."/>
            <person name="Kawashima T."/>
            <person name="Kojima M."/>
            <person name="Kondo S."/>
            <person name="Konno H."/>
            <person name="Nakano K."/>
            <person name="Ninomiya N."/>
            <person name="Nishio T."/>
            <person name="Okada M."/>
            <person name="Plessy C."/>
            <person name="Shibata K."/>
            <person name="Shiraki T."/>
            <person name="Suzuki S."/>
            <person name="Tagami M."/>
            <person name="Waki K."/>
            <person name="Watahiki A."/>
            <person name="Okamura-Oho Y."/>
            <person name="Suzuki H."/>
            <person name="Kawai J."/>
            <person name="Hayashizaki Y."/>
        </authorList>
    </citation>
    <scope>NUCLEOTIDE SEQUENCE [LARGE SCALE MRNA] (ISOFORM 2)</scope>
    <source>
        <strain evidence="14">C57BL/6J</strain>
        <tissue evidence="14">Testis</tissue>
    </source>
</reference>
<reference evidence="11 13" key="2">
    <citation type="journal article" date="2004" name="Genome Res.">
        <title>The status, quality, and expansion of the NIH full-length cDNA project: the Mammalian Gene Collection (MGC).</title>
        <authorList>
            <consortium name="The MGC Project Team"/>
        </authorList>
    </citation>
    <scope>NUCLEOTIDE SEQUENCE [LARGE SCALE MRNA] (ISOFORM 1)</scope>
    <source>
        <strain evidence="12">NMRI</strain>
        <tissue evidence="13">Brain</tissue>
        <tissue evidence="12">Mammary tumor</tissue>
    </source>
</reference>
<reference evidence="11 15" key="3">
    <citation type="journal article" date="2004" name="Genomics">
        <title>Deletion of multimerin-1 in alpha-synuclein-deficient mice.</title>
        <authorList>
            <person name="Specht C.G."/>
            <person name="Schoepfer R."/>
        </authorList>
    </citation>
    <scope>NUCLEOTIDE SEQUENCE [MRNA] OF 930-1210 (ISOFORM 1)</scope>
    <source>
        <strain evidence="15">ICR</strain>
        <tissue evidence="15">Embryo</tissue>
    </source>
</reference>
<reference key="4">
    <citation type="journal article" date="2010" name="Cell">
        <title>A tissue-specific atlas of mouse protein phosphorylation and expression.</title>
        <authorList>
            <person name="Huttlin E.L."/>
            <person name="Jedrychowski M.P."/>
            <person name="Elias J.E."/>
            <person name="Goswami T."/>
            <person name="Rad R."/>
            <person name="Beausoleil S.A."/>
            <person name="Villen J."/>
            <person name="Haas W."/>
            <person name="Sowa M.E."/>
            <person name="Gygi S.P."/>
        </authorList>
    </citation>
    <scope>IDENTIFICATION BY MASS SPECTROMETRY [LARGE SCALE ANALYSIS]</scope>
    <source>
        <tissue>Spleen</tissue>
    </source>
</reference>
<organism>
    <name type="scientific">Mus musculus</name>
    <name type="common">Mouse</name>
    <dbReference type="NCBI Taxonomy" id="10090"/>
    <lineage>
        <taxon>Eukaryota</taxon>
        <taxon>Metazoa</taxon>
        <taxon>Chordata</taxon>
        <taxon>Craniata</taxon>
        <taxon>Vertebrata</taxon>
        <taxon>Euteleostomi</taxon>
        <taxon>Mammalia</taxon>
        <taxon>Eutheria</taxon>
        <taxon>Euarchontoglires</taxon>
        <taxon>Glires</taxon>
        <taxon>Rodentia</taxon>
        <taxon>Myomorpha</taxon>
        <taxon>Muroidea</taxon>
        <taxon>Muridae</taxon>
        <taxon>Murinae</taxon>
        <taxon>Mus</taxon>
        <taxon>Mus</taxon>
    </lineage>
</organism>